<accession>Q6CJE6</accession>
<sequence length="305" mass="35473">MKASLLRTSKLYKGLHSITKDAISKVDTFPKNKQHETLHRLNSFNENPTRKTLEKLVYSVHFHLLNDPPKHVDILRQYPNELAKFWPYEMQHSILEMDDPNLTSQTILWSRNNKDALDFLSFNRHKWLRPKNWQTPNEELIKDITGIDGLQSTQITEVLRLPAEKIKETLRQIFEHYYFLKTNPKLCATKKLQAPIVEIGMKPDGFDIADIRIDNLFKKKVKLISDLLYSQNPVLTSDAESILTSIVNDPDLNRRTKRLYKNVASRSYLFKDGKFEISELARGGFVLSKENLSENLAAALEEEHN</sequence>
<reference key="1">
    <citation type="journal article" date="2004" name="Nature">
        <title>Genome evolution in yeasts.</title>
        <authorList>
            <person name="Dujon B."/>
            <person name="Sherman D."/>
            <person name="Fischer G."/>
            <person name="Durrens P."/>
            <person name="Casaregola S."/>
            <person name="Lafontaine I."/>
            <person name="de Montigny J."/>
            <person name="Marck C."/>
            <person name="Neuveglise C."/>
            <person name="Talla E."/>
            <person name="Goffard N."/>
            <person name="Frangeul L."/>
            <person name="Aigle M."/>
            <person name="Anthouard V."/>
            <person name="Babour A."/>
            <person name="Barbe V."/>
            <person name="Barnay S."/>
            <person name="Blanchin S."/>
            <person name="Beckerich J.-M."/>
            <person name="Beyne E."/>
            <person name="Bleykasten C."/>
            <person name="Boisrame A."/>
            <person name="Boyer J."/>
            <person name="Cattolico L."/>
            <person name="Confanioleri F."/>
            <person name="de Daruvar A."/>
            <person name="Despons L."/>
            <person name="Fabre E."/>
            <person name="Fairhead C."/>
            <person name="Ferry-Dumazet H."/>
            <person name="Groppi A."/>
            <person name="Hantraye F."/>
            <person name="Hennequin C."/>
            <person name="Jauniaux N."/>
            <person name="Joyet P."/>
            <person name="Kachouri R."/>
            <person name="Kerrest A."/>
            <person name="Koszul R."/>
            <person name="Lemaire M."/>
            <person name="Lesur I."/>
            <person name="Ma L."/>
            <person name="Muller H."/>
            <person name="Nicaud J.-M."/>
            <person name="Nikolski M."/>
            <person name="Oztas S."/>
            <person name="Ozier-Kalogeropoulos O."/>
            <person name="Pellenz S."/>
            <person name="Potier S."/>
            <person name="Richard G.-F."/>
            <person name="Straub M.-L."/>
            <person name="Suleau A."/>
            <person name="Swennen D."/>
            <person name="Tekaia F."/>
            <person name="Wesolowski-Louvel M."/>
            <person name="Westhof E."/>
            <person name="Wirth B."/>
            <person name="Zeniou-Meyer M."/>
            <person name="Zivanovic Y."/>
            <person name="Bolotin-Fukuhara M."/>
            <person name="Thierry A."/>
            <person name="Bouchier C."/>
            <person name="Caudron B."/>
            <person name="Scarpelli C."/>
            <person name="Gaillardin C."/>
            <person name="Weissenbach J."/>
            <person name="Wincker P."/>
            <person name="Souciet J.-L."/>
        </authorList>
    </citation>
    <scope>NUCLEOTIDE SEQUENCE [LARGE SCALE GENOMIC DNA]</scope>
    <source>
        <strain>ATCC 8585 / CBS 2359 / DSM 70799 / NBRC 1267 / NRRL Y-1140 / WM37</strain>
    </source>
</reference>
<proteinExistence type="inferred from homology"/>
<feature type="chain" id="PRO_0000399685" description="Genetic interactor of prohibitin 5, mitochondrial">
    <location>
        <begin position="1"/>
        <end position="305"/>
    </location>
</feature>
<evidence type="ECO:0000250" key="1"/>
<evidence type="ECO:0000305" key="2"/>
<name>GEP5_KLULA</name>
<comment type="function">
    <text evidence="1">Essential for respiratory growth and required for maintenance of mtDNA. Required for cell survival in the absence of prohibitins (By similarity).</text>
</comment>
<comment type="subcellular location">
    <subcellularLocation>
        <location evidence="1">Mitochondrion</location>
    </subcellularLocation>
</comment>
<comment type="similarity">
    <text evidence="2">Belongs to the GEP5 family.</text>
</comment>
<gene>
    <name type="primary">GEP5</name>
    <name type="synonym">RRG5</name>
    <name type="ordered locus">KLLA0F19228g</name>
</gene>
<protein>
    <recommendedName>
        <fullName>Genetic interactor of prohibitin 5, mitochondrial</fullName>
    </recommendedName>
    <alternativeName>
        <fullName>Required for respiratory growth protein 5</fullName>
    </alternativeName>
</protein>
<keyword id="KW-0496">Mitochondrion</keyword>
<keyword id="KW-1185">Reference proteome</keyword>
<organism>
    <name type="scientific">Kluyveromyces lactis (strain ATCC 8585 / CBS 2359 / DSM 70799 / NBRC 1267 / NRRL Y-1140 / WM37)</name>
    <name type="common">Yeast</name>
    <name type="synonym">Candida sphaerica</name>
    <dbReference type="NCBI Taxonomy" id="284590"/>
    <lineage>
        <taxon>Eukaryota</taxon>
        <taxon>Fungi</taxon>
        <taxon>Dikarya</taxon>
        <taxon>Ascomycota</taxon>
        <taxon>Saccharomycotina</taxon>
        <taxon>Saccharomycetes</taxon>
        <taxon>Saccharomycetales</taxon>
        <taxon>Saccharomycetaceae</taxon>
        <taxon>Kluyveromyces</taxon>
    </lineage>
</organism>
<dbReference type="EMBL" id="CR382126">
    <property type="protein sequence ID" value="CAG98651.1"/>
    <property type="molecule type" value="Genomic_DNA"/>
</dbReference>
<dbReference type="RefSeq" id="XP_455943.1">
    <property type="nucleotide sequence ID" value="XM_455943.1"/>
</dbReference>
<dbReference type="SMR" id="Q6CJE6"/>
<dbReference type="FunCoup" id="Q6CJE6">
    <property type="interactions" value="34"/>
</dbReference>
<dbReference type="PaxDb" id="284590-Q6CJE6"/>
<dbReference type="KEGG" id="kla:KLLA0_F19228g"/>
<dbReference type="eggNOG" id="ENOG502S2Q8">
    <property type="taxonomic scope" value="Eukaryota"/>
</dbReference>
<dbReference type="HOGENOM" id="CLU_079415_0_0_1"/>
<dbReference type="InParanoid" id="Q6CJE6"/>
<dbReference type="OMA" id="FWPYERH"/>
<dbReference type="Proteomes" id="UP000000598">
    <property type="component" value="Chromosome F"/>
</dbReference>
<dbReference type="GO" id="GO:0005739">
    <property type="term" value="C:mitochondrion"/>
    <property type="evidence" value="ECO:0007669"/>
    <property type="project" value="UniProtKB-SubCell"/>
</dbReference>
<dbReference type="GO" id="GO:0000002">
    <property type="term" value="P:mitochondrial genome maintenance"/>
    <property type="evidence" value="ECO:0007669"/>
    <property type="project" value="InterPro"/>
</dbReference>
<dbReference type="InterPro" id="IPR031455">
    <property type="entry name" value="Gep5"/>
</dbReference>
<dbReference type="Pfam" id="PF17053">
    <property type="entry name" value="GEP5"/>
    <property type="match status" value="1"/>
</dbReference>